<protein>
    <recommendedName>
        <fullName evidence="1">Probable transcriptional regulatory protein LAF_0541</fullName>
    </recommendedName>
</protein>
<gene>
    <name type="ordered locus">LAF_0541</name>
</gene>
<reference key="1">
    <citation type="journal article" date="2008" name="DNA Res.">
        <title>Comparative genome analysis of Lactobacillus reuteri and Lactobacillus fermentum reveal a genomic island for reuterin and cobalamin production.</title>
        <authorList>
            <person name="Morita H."/>
            <person name="Toh H."/>
            <person name="Fukuda S."/>
            <person name="Horikawa H."/>
            <person name="Oshima K."/>
            <person name="Suzuki T."/>
            <person name="Murakami M."/>
            <person name="Hisamatsu S."/>
            <person name="Kato Y."/>
            <person name="Takizawa T."/>
            <person name="Fukuoka H."/>
            <person name="Yoshimura T."/>
            <person name="Itoh K."/>
            <person name="O'Sullivan D.J."/>
            <person name="McKay L.L."/>
            <person name="Ohno H."/>
            <person name="Kikuchi J."/>
            <person name="Masaoka T."/>
            <person name="Hattori M."/>
        </authorList>
    </citation>
    <scope>NUCLEOTIDE SEQUENCE [LARGE SCALE GENOMIC DNA]</scope>
    <source>
        <strain>NBRC 3956 / LMG 18251</strain>
    </source>
</reference>
<name>Y541_LIMF3</name>
<feature type="chain" id="PRO_1000132207" description="Probable transcriptional regulatory protein LAF_0541">
    <location>
        <begin position="1"/>
        <end position="247"/>
    </location>
</feature>
<feature type="region of interest" description="Disordered" evidence="2">
    <location>
        <begin position="1"/>
        <end position="22"/>
    </location>
</feature>
<comment type="subcellular location">
    <subcellularLocation>
        <location evidence="1">Cytoplasm</location>
    </subcellularLocation>
</comment>
<comment type="similarity">
    <text evidence="1">Belongs to the TACO1 family.</text>
</comment>
<dbReference type="EMBL" id="AP008937">
    <property type="protein sequence ID" value="BAG26877.1"/>
    <property type="molecule type" value="Genomic_DNA"/>
</dbReference>
<dbReference type="RefSeq" id="WP_003686056.1">
    <property type="nucleotide sequence ID" value="NC_010610.1"/>
</dbReference>
<dbReference type="SMR" id="B2GB45"/>
<dbReference type="KEGG" id="lfe:LAF_0541"/>
<dbReference type="eggNOG" id="COG0217">
    <property type="taxonomic scope" value="Bacteria"/>
</dbReference>
<dbReference type="HOGENOM" id="CLU_062974_3_0_9"/>
<dbReference type="Proteomes" id="UP000001697">
    <property type="component" value="Chromosome"/>
</dbReference>
<dbReference type="GO" id="GO:0005829">
    <property type="term" value="C:cytosol"/>
    <property type="evidence" value="ECO:0007669"/>
    <property type="project" value="TreeGrafter"/>
</dbReference>
<dbReference type="GO" id="GO:0003677">
    <property type="term" value="F:DNA binding"/>
    <property type="evidence" value="ECO:0007669"/>
    <property type="project" value="UniProtKB-UniRule"/>
</dbReference>
<dbReference type="GO" id="GO:0006355">
    <property type="term" value="P:regulation of DNA-templated transcription"/>
    <property type="evidence" value="ECO:0007669"/>
    <property type="project" value="UniProtKB-UniRule"/>
</dbReference>
<dbReference type="FunFam" id="1.10.10.200:FF:000002">
    <property type="entry name" value="Probable transcriptional regulatory protein CLM62_37755"/>
    <property type="match status" value="1"/>
</dbReference>
<dbReference type="FunFam" id="3.30.70.980:FF:000002">
    <property type="entry name" value="Probable transcriptional regulatory protein YebC"/>
    <property type="match status" value="1"/>
</dbReference>
<dbReference type="Gene3D" id="1.10.10.200">
    <property type="match status" value="1"/>
</dbReference>
<dbReference type="Gene3D" id="3.30.70.980">
    <property type="match status" value="2"/>
</dbReference>
<dbReference type="HAMAP" id="MF_00693">
    <property type="entry name" value="Transcrip_reg_TACO1"/>
    <property type="match status" value="1"/>
</dbReference>
<dbReference type="InterPro" id="IPR017856">
    <property type="entry name" value="Integrase-like_N"/>
</dbReference>
<dbReference type="InterPro" id="IPR048300">
    <property type="entry name" value="TACO1_YebC-like_2nd/3rd_dom"/>
</dbReference>
<dbReference type="InterPro" id="IPR049083">
    <property type="entry name" value="TACO1_YebC_N"/>
</dbReference>
<dbReference type="InterPro" id="IPR002876">
    <property type="entry name" value="Transcrip_reg_TACO1-like"/>
</dbReference>
<dbReference type="InterPro" id="IPR026564">
    <property type="entry name" value="Transcrip_reg_TACO1-like_dom3"/>
</dbReference>
<dbReference type="InterPro" id="IPR029072">
    <property type="entry name" value="YebC-like"/>
</dbReference>
<dbReference type="NCBIfam" id="NF001030">
    <property type="entry name" value="PRK00110.1"/>
    <property type="match status" value="1"/>
</dbReference>
<dbReference type="NCBIfam" id="NF009044">
    <property type="entry name" value="PRK12378.1"/>
    <property type="match status" value="1"/>
</dbReference>
<dbReference type="NCBIfam" id="TIGR01033">
    <property type="entry name" value="YebC/PmpR family DNA-binding transcriptional regulator"/>
    <property type="match status" value="1"/>
</dbReference>
<dbReference type="PANTHER" id="PTHR12532:SF6">
    <property type="entry name" value="TRANSCRIPTIONAL REGULATORY PROTEIN YEBC-RELATED"/>
    <property type="match status" value="1"/>
</dbReference>
<dbReference type="PANTHER" id="PTHR12532">
    <property type="entry name" value="TRANSLATIONAL ACTIVATOR OF CYTOCHROME C OXIDASE 1"/>
    <property type="match status" value="1"/>
</dbReference>
<dbReference type="Pfam" id="PF20772">
    <property type="entry name" value="TACO1_YebC_N"/>
    <property type="match status" value="1"/>
</dbReference>
<dbReference type="Pfam" id="PF01709">
    <property type="entry name" value="Transcrip_reg"/>
    <property type="match status" value="1"/>
</dbReference>
<dbReference type="SUPFAM" id="SSF75625">
    <property type="entry name" value="YebC-like"/>
    <property type="match status" value="1"/>
</dbReference>
<evidence type="ECO:0000255" key="1">
    <source>
        <dbReference type="HAMAP-Rule" id="MF_00693"/>
    </source>
</evidence>
<evidence type="ECO:0000256" key="2">
    <source>
        <dbReference type="SAM" id="MobiDB-lite"/>
    </source>
</evidence>
<keyword id="KW-0963">Cytoplasm</keyword>
<keyword id="KW-0238">DNA-binding</keyword>
<keyword id="KW-1185">Reference proteome</keyword>
<keyword id="KW-0804">Transcription</keyword>
<keyword id="KW-0805">Transcription regulation</keyword>
<sequence>MSGHSKWHNIQGRKNAQDAKRGKIFQKISRDLYQAAKAGDPDPDNNPQLRLVMDKARAANMPKQNIQRAIDKATGAGGANFEEITYEGYGPGGVAVMVFCLTDNKNRTAAAIRSAFTHSGGSLGATGSVSYMFNRQGLIEILRDGLDKDEDDMLMDALDAGADDMQATDDKFQIFTDPSAMTSVRDALQEQGYELETAEVTMIPENKTKVPADKVGQYQHLIDELEDNDDVADVYEAAFVEDADQGE</sequence>
<organism>
    <name type="scientific">Limosilactobacillus fermentum (strain NBRC 3956 / LMG 18251)</name>
    <name type="common">Lactobacillus fermentum</name>
    <dbReference type="NCBI Taxonomy" id="334390"/>
    <lineage>
        <taxon>Bacteria</taxon>
        <taxon>Bacillati</taxon>
        <taxon>Bacillota</taxon>
        <taxon>Bacilli</taxon>
        <taxon>Lactobacillales</taxon>
        <taxon>Lactobacillaceae</taxon>
        <taxon>Limosilactobacillus</taxon>
    </lineage>
</organism>
<proteinExistence type="inferred from homology"/>
<accession>B2GB45</accession>